<protein>
    <recommendedName>
        <fullName>SWI/SNF-related matrix-associated actin-dependent regulator of chromatin subfamily A-like protein 1</fullName>
        <ecNumber evidence="2">3.6.4.-</ecNumber>
    </recommendedName>
    <alternativeName>
        <fullName>HepA-related protein</fullName>
        <shortName>mharp</shortName>
    </alternativeName>
    <alternativeName>
        <fullName>Sucrose nonfermenting protein 2-like 1</fullName>
    </alternativeName>
</protein>
<reference key="1">
    <citation type="journal article" date="2000" name="Genomics">
        <title>Cloning and characterization of HARP/SMARCAL1: a prokaryotic HepA-related SNF2 helicase protein from human and mouse.</title>
        <authorList>
            <person name="Coleman M.A."/>
            <person name="Eisen J.A."/>
            <person name="Mohrenweiser H.W."/>
        </authorList>
    </citation>
    <scope>NUCLEOTIDE SEQUENCE [GENOMIC DNA / MRNA] (ISOFORM 1)</scope>
    <scope>TISSUE SPECIFICITY</scope>
</reference>
<reference key="2">
    <citation type="journal article" date="2005" name="Science">
        <title>The transcriptional landscape of the mammalian genome.</title>
        <authorList>
            <person name="Carninci P."/>
            <person name="Kasukawa T."/>
            <person name="Katayama S."/>
            <person name="Gough J."/>
            <person name="Frith M.C."/>
            <person name="Maeda N."/>
            <person name="Oyama R."/>
            <person name="Ravasi T."/>
            <person name="Lenhard B."/>
            <person name="Wells C."/>
            <person name="Kodzius R."/>
            <person name="Shimokawa K."/>
            <person name="Bajic V.B."/>
            <person name="Brenner S.E."/>
            <person name="Batalov S."/>
            <person name="Forrest A.R."/>
            <person name="Zavolan M."/>
            <person name="Davis M.J."/>
            <person name="Wilming L.G."/>
            <person name="Aidinis V."/>
            <person name="Allen J.E."/>
            <person name="Ambesi-Impiombato A."/>
            <person name="Apweiler R."/>
            <person name="Aturaliya R.N."/>
            <person name="Bailey T.L."/>
            <person name="Bansal M."/>
            <person name="Baxter L."/>
            <person name="Beisel K.W."/>
            <person name="Bersano T."/>
            <person name="Bono H."/>
            <person name="Chalk A.M."/>
            <person name="Chiu K.P."/>
            <person name="Choudhary V."/>
            <person name="Christoffels A."/>
            <person name="Clutterbuck D.R."/>
            <person name="Crowe M.L."/>
            <person name="Dalla E."/>
            <person name="Dalrymple B.P."/>
            <person name="de Bono B."/>
            <person name="Della Gatta G."/>
            <person name="di Bernardo D."/>
            <person name="Down T."/>
            <person name="Engstrom P."/>
            <person name="Fagiolini M."/>
            <person name="Faulkner G."/>
            <person name="Fletcher C.F."/>
            <person name="Fukushima T."/>
            <person name="Furuno M."/>
            <person name="Futaki S."/>
            <person name="Gariboldi M."/>
            <person name="Georgii-Hemming P."/>
            <person name="Gingeras T.R."/>
            <person name="Gojobori T."/>
            <person name="Green R.E."/>
            <person name="Gustincich S."/>
            <person name="Harbers M."/>
            <person name="Hayashi Y."/>
            <person name="Hensch T.K."/>
            <person name="Hirokawa N."/>
            <person name="Hill D."/>
            <person name="Huminiecki L."/>
            <person name="Iacono M."/>
            <person name="Ikeo K."/>
            <person name="Iwama A."/>
            <person name="Ishikawa T."/>
            <person name="Jakt M."/>
            <person name="Kanapin A."/>
            <person name="Katoh M."/>
            <person name="Kawasawa Y."/>
            <person name="Kelso J."/>
            <person name="Kitamura H."/>
            <person name="Kitano H."/>
            <person name="Kollias G."/>
            <person name="Krishnan S.P."/>
            <person name="Kruger A."/>
            <person name="Kummerfeld S.K."/>
            <person name="Kurochkin I.V."/>
            <person name="Lareau L.F."/>
            <person name="Lazarevic D."/>
            <person name="Lipovich L."/>
            <person name="Liu J."/>
            <person name="Liuni S."/>
            <person name="McWilliam S."/>
            <person name="Madan Babu M."/>
            <person name="Madera M."/>
            <person name="Marchionni L."/>
            <person name="Matsuda H."/>
            <person name="Matsuzawa S."/>
            <person name="Miki H."/>
            <person name="Mignone F."/>
            <person name="Miyake S."/>
            <person name="Morris K."/>
            <person name="Mottagui-Tabar S."/>
            <person name="Mulder N."/>
            <person name="Nakano N."/>
            <person name="Nakauchi H."/>
            <person name="Ng P."/>
            <person name="Nilsson R."/>
            <person name="Nishiguchi S."/>
            <person name="Nishikawa S."/>
            <person name="Nori F."/>
            <person name="Ohara O."/>
            <person name="Okazaki Y."/>
            <person name="Orlando V."/>
            <person name="Pang K.C."/>
            <person name="Pavan W.J."/>
            <person name="Pavesi G."/>
            <person name="Pesole G."/>
            <person name="Petrovsky N."/>
            <person name="Piazza S."/>
            <person name="Reed J."/>
            <person name="Reid J.F."/>
            <person name="Ring B.Z."/>
            <person name="Ringwald M."/>
            <person name="Rost B."/>
            <person name="Ruan Y."/>
            <person name="Salzberg S.L."/>
            <person name="Sandelin A."/>
            <person name="Schneider C."/>
            <person name="Schoenbach C."/>
            <person name="Sekiguchi K."/>
            <person name="Semple C.A."/>
            <person name="Seno S."/>
            <person name="Sessa L."/>
            <person name="Sheng Y."/>
            <person name="Shibata Y."/>
            <person name="Shimada H."/>
            <person name="Shimada K."/>
            <person name="Silva D."/>
            <person name="Sinclair B."/>
            <person name="Sperling S."/>
            <person name="Stupka E."/>
            <person name="Sugiura K."/>
            <person name="Sultana R."/>
            <person name="Takenaka Y."/>
            <person name="Taki K."/>
            <person name="Tammoja K."/>
            <person name="Tan S.L."/>
            <person name="Tang S."/>
            <person name="Taylor M.S."/>
            <person name="Tegner J."/>
            <person name="Teichmann S.A."/>
            <person name="Ueda H.R."/>
            <person name="van Nimwegen E."/>
            <person name="Verardo R."/>
            <person name="Wei C.L."/>
            <person name="Yagi K."/>
            <person name="Yamanishi H."/>
            <person name="Zabarovsky E."/>
            <person name="Zhu S."/>
            <person name="Zimmer A."/>
            <person name="Hide W."/>
            <person name="Bult C."/>
            <person name="Grimmond S.M."/>
            <person name="Teasdale R.D."/>
            <person name="Liu E.T."/>
            <person name="Brusic V."/>
            <person name="Quackenbush J."/>
            <person name="Wahlestedt C."/>
            <person name="Mattick J.S."/>
            <person name="Hume D.A."/>
            <person name="Kai C."/>
            <person name="Sasaki D."/>
            <person name="Tomaru Y."/>
            <person name="Fukuda S."/>
            <person name="Kanamori-Katayama M."/>
            <person name="Suzuki M."/>
            <person name="Aoki J."/>
            <person name="Arakawa T."/>
            <person name="Iida J."/>
            <person name="Imamura K."/>
            <person name="Itoh M."/>
            <person name="Kato T."/>
            <person name="Kawaji H."/>
            <person name="Kawagashira N."/>
            <person name="Kawashima T."/>
            <person name="Kojima M."/>
            <person name="Kondo S."/>
            <person name="Konno H."/>
            <person name="Nakano K."/>
            <person name="Ninomiya N."/>
            <person name="Nishio T."/>
            <person name="Okada M."/>
            <person name="Plessy C."/>
            <person name="Shibata K."/>
            <person name="Shiraki T."/>
            <person name="Suzuki S."/>
            <person name="Tagami M."/>
            <person name="Waki K."/>
            <person name="Watahiki A."/>
            <person name="Okamura-Oho Y."/>
            <person name="Suzuki H."/>
            <person name="Kawai J."/>
            <person name="Hayashizaki Y."/>
        </authorList>
    </citation>
    <scope>NUCLEOTIDE SEQUENCE [LARGE SCALE MRNA] (ISOFORMS 1; 2; 3 AND 4)</scope>
    <source>
        <strain>C57BL/6J</strain>
        <strain>NOD</strain>
        <tissue>Cerebellum</tissue>
        <tissue>Embryo</tissue>
        <tissue>Testis</tissue>
        <tissue>Thymus</tissue>
    </source>
</reference>
<reference key="3">
    <citation type="journal article" date="2004" name="Genome Res.">
        <title>The status, quality, and expansion of the NIH full-length cDNA project: the Mammalian Gene Collection (MGC).</title>
        <authorList>
            <consortium name="The MGC Project Team"/>
        </authorList>
    </citation>
    <scope>NUCLEOTIDE SEQUENCE [LARGE SCALE MRNA] (ISOFORM 1)</scope>
    <source>
        <strain>Czech II</strain>
        <tissue>Mammary gland</tissue>
    </source>
</reference>
<reference key="4">
    <citation type="journal article" date="2010" name="Cell">
        <title>A tissue-specific atlas of mouse protein phosphorylation and expression.</title>
        <authorList>
            <person name="Huttlin E.L."/>
            <person name="Jedrychowski M.P."/>
            <person name="Elias J.E."/>
            <person name="Goswami T."/>
            <person name="Rad R."/>
            <person name="Beausoleil S.A."/>
            <person name="Villen J."/>
            <person name="Haas W."/>
            <person name="Sowa M.E."/>
            <person name="Gygi S.P."/>
        </authorList>
    </citation>
    <scope>IDENTIFICATION BY MASS SPECTROMETRY [LARGE SCALE ANALYSIS]</scope>
    <source>
        <tissue>Brain</tissue>
        <tissue>Lung</tissue>
        <tissue>Spleen</tissue>
    </source>
</reference>
<keyword id="KW-0002">3D-structure</keyword>
<keyword id="KW-0007">Acetylation</keyword>
<keyword id="KW-0025">Alternative splicing</keyword>
<keyword id="KW-0175">Coiled coil</keyword>
<keyword id="KW-0378">Hydrolase</keyword>
<keyword id="KW-0539">Nucleus</keyword>
<keyword id="KW-0597">Phosphoprotein</keyword>
<keyword id="KW-1185">Reference proteome</keyword>
<keyword id="KW-0677">Repeat</keyword>
<accession>Q8BJL0</accession>
<accession>Q3TEQ9</accession>
<accession>Q3U4W0</accession>
<accession>Q3V3A8</accession>
<accession>Q8BVK7</accession>
<accession>Q8BXW4</accession>
<accession>Q8K309</accession>
<accession>Q9EQK8</accession>
<accession>Q9QYC4</accession>
<organism>
    <name type="scientific">Mus musculus</name>
    <name type="common">Mouse</name>
    <dbReference type="NCBI Taxonomy" id="10090"/>
    <lineage>
        <taxon>Eukaryota</taxon>
        <taxon>Metazoa</taxon>
        <taxon>Chordata</taxon>
        <taxon>Craniata</taxon>
        <taxon>Vertebrata</taxon>
        <taxon>Euteleostomi</taxon>
        <taxon>Mammalia</taxon>
        <taxon>Eutheria</taxon>
        <taxon>Euarchontoglires</taxon>
        <taxon>Glires</taxon>
        <taxon>Rodentia</taxon>
        <taxon>Myomorpha</taxon>
        <taxon>Muroidea</taxon>
        <taxon>Muridae</taxon>
        <taxon>Murinae</taxon>
        <taxon>Mus</taxon>
        <taxon>Mus</taxon>
    </lineage>
</organism>
<gene>
    <name type="primary">Smarcal1</name>
    <name type="synonym">Harp</name>
</gene>
<evidence type="ECO:0000250" key="1"/>
<evidence type="ECO:0000250" key="2">
    <source>
        <dbReference type="UniProtKB" id="Q9NZC9"/>
    </source>
</evidence>
<evidence type="ECO:0000255" key="3"/>
<evidence type="ECO:0000255" key="4">
    <source>
        <dbReference type="PROSITE-ProRule" id="PRU00541"/>
    </source>
</evidence>
<evidence type="ECO:0000255" key="5">
    <source>
        <dbReference type="PROSITE-ProRule" id="PRU00542"/>
    </source>
</evidence>
<evidence type="ECO:0000255" key="6">
    <source>
        <dbReference type="PROSITE-ProRule" id="PRU00800"/>
    </source>
</evidence>
<evidence type="ECO:0000256" key="7">
    <source>
        <dbReference type="SAM" id="MobiDB-lite"/>
    </source>
</evidence>
<evidence type="ECO:0000269" key="8">
    <source>
    </source>
</evidence>
<evidence type="ECO:0000303" key="9">
    <source>
    </source>
</evidence>
<evidence type="ECO:0000305" key="10"/>
<evidence type="ECO:0007829" key="11">
    <source>
        <dbReference type="PDB" id="4O66"/>
    </source>
</evidence>
<feature type="initiator methionine" description="Removed" evidence="2">
    <location>
        <position position="1"/>
    </location>
</feature>
<feature type="chain" id="PRO_0000074349" description="SWI/SNF-related matrix-associated actin-dependent regulator of chromatin subfamily A-like protein 1">
    <location>
        <begin position="2"/>
        <end position="910"/>
    </location>
</feature>
<feature type="domain" description="HARP 1" evidence="6">
    <location>
        <begin position="199"/>
        <end position="269"/>
    </location>
</feature>
<feature type="domain" description="HARP 2" evidence="6">
    <location>
        <begin position="286"/>
        <end position="357"/>
    </location>
</feature>
<feature type="domain" description="Helicase ATP-binding" evidence="4">
    <location>
        <begin position="404"/>
        <end position="559"/>
    </location>
</feature>
<feature type="domain" description="Helicase C-terminal" evidence="5">
    <location>
        <begin position="674"/>
        <end position="827"/>
    </location>
</feature>
<feature type="region of interest" description="Disordered" evidence="7">
    <location>
        <begin position="1"/>
        <end position="198"/>
    </location>
</feature>
<feature type="region of interest" description="Mediates interaction with RPA2" evidence="1">
    <location>
        <begin position="2"/>
        <end position="29"/>
    </location>
</feature>
<feature type="region of interest" description="Mediates interaction with RPA2" evidence="2">
    <location>
        <begin position="5"/>
        <end position="29"/>
    </location>
</feature>
<feature type="region of interest" description="Disordered" evidence="7">
    <location>
        <begin position="868"/>
        <end position="896"/>
    </location>
</feature>
<feature type="coiled-coil region" evidence="3">
    <location>
        <begin position="3"/>
        <end position="34"/>
    </location>
</feature>
<feature type="short sequence motif" description="DESH box">
    <location>
        <begin position="508"/>
        <end position="511"/>
    </location>
</feature>
<feature type="short sequence motif" description="Nuclear localization signal" evidence="2">
    <location>
        <begin position="603"/>
        <end position="620"/>
    </location>
</feature>
<feature type="compositionally biased region" description="Basic and acidic residues" evidence="7">
    <location>
        <begin position="7"/>
        <end position="29"/>
    </location>
</feature>
<feature type="compositionally biased region" description="Low complexity" evidence="7">
    <location>
        <begin position="31"/>
        <end position="51"/>
    </location>
</feature>
<feature type="compositionally biased region" description="Polar residues" evidence="7">
    <location>
        <begin position="69"/>
        <end position="80"/>
    </location>
</feature>
<feature type="compositionally biased region" description="Polar residues" evidence="7">
    <location>
        <begin position="133"/>
        <end position="149"/>
    </location>
</feature>
<feature type="compositionally biased region" description="Polar residues" evidence="7">
    <location>
        <begin position="164"/>
        <end position="173"/>
    </location>
</feature>
<feature type="compositionally biased region" description="Polar residues" evidence="7">
    <location>
        <begin position="868"/>
        <end position="878"/>
    </location>
</feature>
<feature type="binding site" evidence="4">
    <location>
        <begin position="417"/>
        <end position="424"/>
    </location>
    <ligand>
        <name>ATP</name>
        <dbReference type="ChEBI" id="CHEBI:30616"/>
    </ligand>
</feature>
<feature type="modified residue" description="N-acetylserine" evidence="2">
    <location>
        <position position="2"/>
    </location>
</feature>
<feature type="modified residue" description="Phosphoserine" evidence="2">
    <location>
        <position position="118"/>
    </location>
</feature>
<feature type="modified residue" description="Phosphoserine" evidence="2">
    <location>
        <position position="165"/>
    </location>
</feature>
<feature type="splice variant" id="VSP_036216" description="In isoform 4." evidence="9">
    <original>S</original>
    <variation>R</variation>
    <location>
        <position position="404"/>
    </location>
</feature>
<feature type="splice variant" id="VSP_036217" description="In isoform 4." evidence="9">
    <location>
        <begin position="405"/>
        <end position="910"/>
    </location>
</feature>
<feature type="splice variant" id="VSP_036218" description="In isoform 3." evidence="9">
    <original>DESHFLKNIKTARCRAAVPILKVAKRVILLSGTPAMSRPAELYTQIIAVKPTFFPQFHAFGLRYCDA</original>
    <variation>VSNGIALKYFVCLDTRKGSTDLGICVLLGPLWALRREGNRNRCLSFIENDFFIPFLKQPLSLCARLS</variation>
    <location>
        <begin position="508"/>
        <end position="574"/>
    </location>
</feature>
<feature type="splice variant" id="VSP_036219" description="In isoform 3." evidence="9">
    <location>
        <begin position="575"/>
        <end position="910"/>
    </location>
</feature>
<feature type="splice variant" id="VSP_012919" description="In isoform 2." evidence="9">
    <original>LIQAEDRVHRIGQTNSVSIH</original>
    <variation>GNVARVPLGMPRAEKYKIRK</variation>
    <location>
        <begin position="769"/>
        <end position="788"/>
    </location>
</feature>
<feature type="splice variant" id="VSP_012920" description="In isoform 2." evidence="9">
    <location>
        <begin position="789"/>
        <end position="910"/>
    </location>
</feature>
<feature type="sequence conflict" description="In Ref. 3; AAH29078." evidence="10" ref="3">
    <original>A</original>
    <variation>T</variation>
    <location>
        <position position="35"/>
    </location>
</feature>
<feature type="sequence conflict" description="In Ref. 3; AAH29078." evidence="10" ref="3">
    <original>F</original>
    <variation>L</variation>
    <location>
        <position position="78"/>
    </location>
</feature>
<feature type="sequence conflict" description="In Ref. 2; BAE32320." evidence="10" ref="2">
    <original>K</original>
    <variation>N</variation>
    <location>
        <position position="529"/>
    </location>
</feature>
<feature type="sequence conflict" description="In Ref. 2; BAC31469." evidence="10" ref="2">
    <original>K</original>
    <variation>R</variation>
    <location>
        <position position="685"/>
    </location>
</feature>
<feature type="sequence conflict" description="In Ref. 1; AAG47648." evidence="10" ref="1">
    <location>
        <begin position="717"/>
        <end position="725"/>
    </location>
</feature>
<feature type="sequence conflict" description="In Ref. 1; AAF24985." evidence="10" ref="1">
    <original>T</original>
    <variation>R</variation>
    <location>
        <position position="717"/>
    </location>
</feature>
<feature type="sequence conflict" description="In Ref. 1; AAF24985." evidence="10" ref="1">
    <original>SAD</original>
    <variation>TRA</variation>
    <location>
        <begin position="719"/>
        <end position="721"/>
    </location>
</feature>
<feature type="sequence conflict" description="In Ref. 1; AAF24985." evidence="10" ref="1">
    <original>AQ</original>
    <variation>LK</variation>
    <location>
        <begin position="724"/>
        <end position="725"/>
    </location>
</feature>
<feature type="sequence conflict" description="In Ref. 1; AAF24985." evidence="10" ref="1">
    <original>T</original>
    <variation>P</variation>
    <location>
        <position position="743"/>
    </location>
</feature>
<feature type="sequence conflict" description="In Ref. 1; AAF24985." evidence="10" ref="1">
    <original>D</original>
    <variation>A</variation>
    <location>
        <position position="834"/>
    </location>
</feature>
<feature type="sequence conflict" description="In Ref. 1; AAG47648." evidence="10" ref="1">
    <location>
        <position position="834"/>
    </location>
</feature>
<feature type="sequence conflict" description="In Ref. 1; AAF24985." evidence="10" ref="1">
    <original>LGS</original>
    <variation>IKN</variation>
    <location>
        <begin position="866"/>
        <end position="868"/>
    </location>
</feature>
<feature type="strand" evidence="11">
    <location>
        <begin position="203"/>
        <end position="210"/>
    </location>
</feature>
<feature type="strand" evidence="11">
    <location>
        <begin position="213"/>
        <end position="218"/>
    </location>
</feature>
<feature type="helix" evidence="11">
    <location>
        <begin position="222"/>
        <end position="230"/>
    </location>
</feature>
<feature type="strand" evidence="11">
    <location>
        <begin position="235"/>
        <end position="237"/>
    </location>
</feature>
<feature type="turn" evidence="11">
    <location>
        <begin position="238"/>
        <end position="241"/>
    </location>
</feature>
<feature type="strand" evidence="11">
    <location>
        <begin position="242"/>
        <end position="246"/>
    </location>
</feature>
<feature type="helix" evidence="11">
    <location>
        <begin position="247"/>
        <end position="249"/>
    </location>
</feature>
<feature type="helix" evidence="11">
    <location>
        <begin position="250"/>
        <end position="257"/>
    </location>
</feature>
<feature type="strand" evidence="11">
    <location>
        <begin position="263"/>
        <end position="266"/>
    </location>
</feature>
<comment type="function">
    <text evidence="2">ATP-dependent annealing helicase that binds selectively to fork DNA relative to ssDNA or dsDNA and catalyzes the rewinding of the stably unwound DNA. Rewinds single-stranded DNA bubbles that are stably bound by replication protein A (RPA). Acts throughout the genome to reanneal stably unwound DNA, performing the opposite reaction of many enzymes, such as helicases and polymerases, that unwind DNA. May play an important role in DNA damage response by acting at stalled replication forks.</text>
</comment>
<comment type="catalytic activity">
    <reaction evidence="2">
        <text>ATP + H2O = ADP + phosphate + H(+)</text>
        <dbReference type="Rhea" id="RHEA:13065"/>
        <dbReference type="ChEBI" id="CHEBI:15377"/>
        <dbReference type="ChEBI" id="CHEBI:15378"/>
        <dbReference type="ChEBI" id="CHEBI:30616"/>
        <dbReference type="ChEBI" id="CHEBI:43474"/>
        <dbReference type="ChEBI" id="CHEBI:456216"/>
    </reaction>
    <physiologicalReaction direction="left-to-right" evidence="2">
        <dbReference type="Rhea" id="RHEA:13066"/>
    </physiologicalReaction>
</comment>
<comment type="subunit">
    <text evidence="1">Interacts with RPA2; the interaction is direct and mediates the recruitment by the RPA complex of SMARCAL1 to sites of DNA damage.</text>
</comment>
<comment type="subcellular location">
    <subcellularLocation>
        <location evidence="1">Nucleus</location>
    </subcellularLocation>
    <text evidence="1">Recruited to damaged DNA regions.</text>
</comment>
<comment type="alternative products">
    <event type="alternative splicing"/>
    <isoform>
        <id>Q8BJL0-1</id>
        <name>1</name>
        <sequence type="displayed"/>
    </isoform>
    <isoform>
        <id>Q8BJL0-2</id>
        <name>2</name>
        <sequence type="described" ref="VSP_012919 VSP_012920"/>
    </isoform>
    <isoform>
        <id>Q8BJL0-3</id>
        <name>3</name>
        <sequence type="described" ref="VSP_036218 VSP_036219"/>
    </isoform>
    <isoform>
        <id>Q8BJL0-4</id>
        <name>4</name>
        <sequence type="described" ref="VSP_036216 VSP_036217"/>
    </isoform>
</comment>
<comment type="tissue specificity">
    <text evidence="8">Ubiquitously expressed, with high levels in brain, heart, kidney, liver and testis.</text>
</comment>
<comment type="PTM">
    <text evidence="1">DNA damage-regulated phosphorylation by kinases that may include ATM, ATR and PRKDC.</text>
</comment>
<comment type="miscellaneous">
    <molecule>Isoform 2</molecule>
    <text evidence="10">May be due to an intron retention.</text>
</comment>
<comment type="similarity">
    <text evidence="6">Belongs to the SNF2/RAD54 helicase family. SMARCAL1 subfamily.</text>
</comment>
<comment type="caution">
    <text evidence="2">Like other proteins within the SNF2 family, do not possess helicase activity but instead has ATP-dependent annealing activity.</text>
</comment>
<proteinExistence type="evidence at protein level"/>
<dbReference type="EC" id="3.6.4.-" evidence="2"/>
<dbReference type="EMBL" id="AF088884">
    <property type="protein sequence ID" value="AAF24985.1"/>
    <property type="molecule type" value="mRNA"/>
</dbReference>
<dbReference type="EMBL" id="AF209773">
    <property type="protein sequence ID" value="AAG47648.1"/>
    <property type="molecule type" value="Genomic_DNA"/>
</dbReference>
<dbReference type="EMBL" id="AK042332">
    <property type="protein sequence ID" value="BAE20630.1"/>
    <property type="molecule type" value="mRNA"/>
</dbReference>
<dbReference type="EMBL" id="AK043129">
    <property type="protein sequence ID" value="BAC31469.1"/>
    <property type="molecule type" value="mRNA"/>
</dbReference>
<dbReference type="EMBL" id="AK077878">
    <property type="protein sequence ID" value="BAC37047.1"/>
    <property type="molecule type" value="mRNA"/>
</dbReference>
<dbReference type="EMBL" id="AK083488">
    <property type="protein sequence ID" value="BAC38933.1"/>
    <property type="molecule type" value="mRNA"/>
</dbReference>
<dbReference type="EMBL" id="AK154020">
    <property type="protein sequence ID" value="BAE32320.1"/>
    <property type="molecule type" value="mRNA"/>
</dbReference>
<dbReference type="EMBL" id="AK169465">
    <property type="protein sequence ID" value="BAE41189.1"/>
    <property type="molecule type" value="mRNA"/>
</dbReference>
<dbReference type="EMBL" id="BC029078">
    <property type="protein sequence ID" value="AAH29078.1"/>
    <property type="molecule type" value="mRNA"/>
</dbReference>
<dbReference type="CCDS" id="CCDS35609.1">
    <molecule id="Q8BJL0-1"/>
</dbReference>
<dbReference type="RefSeq" id="NP_061287.2">
    <molecule id="Q8BJL0-1"/>
    <property type="nucleotide sequence ID" value="NM_018817.2"/>
</dbReference>
<dbReference type="RefSeq" id="XP_006496204.1">
    <molecule id="Q8BJL0-1"/>
    <property type="nucleotide sequence ID" value="XM_006496141.5"/>
</dbReference>
<dbReference type="RefSeq" id="XP_006496205.1">
    <molecule id="Q8BJL0-1"/>
    <property type="nucleotide sequence ID" value="XM_006496142.5"/>
</dbReference>
<dbReference type="RefSeq" id="XP_006496206.1">
    <molecule id="Q8BJL0-1"/>
    <property type="nucleotide sequence ID" value="XM_006496143.5"/>
</dbReference>
<dbReference type="RefSeq" id="XP_006496207.1">
    <molecule id="Q8BJL0-1"/>
    <property type="nucleotide sequence ID" value="XM_006496144.1"/>
</dbReference>
<dbReference type="PDB" id="4O66">
    <property type="method" value="X-ray"/>
    <property type="resolution" value="1.90 A"/>
    <property type="chains" value="A/B/C/D=197-268"/>
</dbReference>
<dbReference type="PDBsum" id="4O66"/>
<dbReference type="SMR" id="Q8BJL0"/>
<dbReference type="BioGRID" id="207633">
    <property type="interactions" value="7"/>
</dbReference>
<dbReference type="FunCoup" id="Q8BJL0">
    <property type="interactions" value="3327"/>
</dbReference>
<dbReference type="STRING" id="10090.ENSMUSP00000047589"/>
<dbReference type="GlyGen" id="Q8BJL0">
    <property type="glycosylation" value="1 site, 1 N-linked glycan (1 site)"/>
</dbReference>
<dbReference type="iPTMnet" id="Q8BJL0"/>
<dbReference type="PhosphoSitePlus" id="Q8BJL0"/>
<dbReference type="PaxDb" id="10090-ENSMUSP00000047589"/>
<dbReference type="PeptideAtlas" id="Q8BJL0"/>
<dbReference type="ProteomicsDB" id="261515">
    <molecule id="Q8BJL0-1"/>
</dbReference>
<dbReference type="ProteomicsDB" id="261516">
    <molecule id="Q8BJL0-2"/>
</dbReference>
<dbReference type="ProteomicsDB" id="261517">
    <molecule id="Q8BJL0-3"/>
</dbReference>
<dbReference type="ProteomicsDB" id="261518">
    <molecule id="Q8BJL0-4"/>
</dbReference>
<dbReference type="Pumba" id="Q8BJL0"/>
<dbReference type="Antibodypedia" id="34237">
    <property type="antibodies" value="209 antibodies from 34 providers"/>
</dbReference>
<dbReference type="DNASU" id="54380"/>
<dbReference type="Ensembl" id="ENSMUST00000047615.15">
    <molecule id="Q8BJL0-1"/>
    <property type="protein sequence ID" value="ENSMUSP00000047589.9"/>
    <property type="gene ID" value="ENSMUSG00000039354.17"/>
</dbReference>
<dbReference type="Ensembl" id="ENSMUST00000152225.2">
    <molecule id="Q8BJL0-1"/>
    <property type="protein sequence ID" value="ENSMUSP00000137833.2"/>
    <property type="gene ID" value="ENSMUSG00000039354.17"/>
</dbReference>
<dbReference type="GeneID" id="54380"/>
<dbReference type="KEGG" id="mmu:54380"/>
<dbReference type="UCSC" id="uc007bko.2">
    <molecule id="Q8BJL0-4"/>
    <property type="organism name" value="mouse"/>
</dbReference>
<dbReference type="UCSC" id="uc007bkq.2">
    <molecule id="Q8BJL0-3"/>
    <property type="organism name" value="mouse"/>
</dbReference>
<dbReference type="UCSC" id="uc007bkr.2">
    <molecule id="Q8BJL0-2"/>
    <property type="organism name" value="mouse"/>
</dbReference>
<dbReference type="UCSC" id="uc007bks.2">
    <molecule id="Q8BJL0-1"/>
    <property type="organism name" value="mouse"/>
</dbReference>
<dbReference type="AGR" id="MGI:1859183"/>
<dbReference type="CTD" id="50485"/>
<dbReference type="MGI" id="MGI:1859183">
    <property type="gene designation" value="Smarcal1"/>
</dbReference>
<dbReference type="VEuPathDB" id="HostDB:ENSMUSG00000039354"/>
<dbReference type="eggNOG" id="KOG1000">
    <property type="taxonomic scope" value="Eukaryota"/>
</dbReference>
<dbReference type="GeneTree" id="ENSGT00940000157608"/>
<dbReference type="HOGENOM" id="CLU_000315_33_1_1"/>
<dbReference type="InParanoid" id="Q8BJL0"/>
<dbReference type="OMA" id="KCVPHAE"/>
<dbReference type="OrthoDB" id="2801544at2759"/>
<dbReference type="PhylomeDB" id="Q8BJL0"/>
<dbReference type="TreeFam" id="TF106474"/>
<dbReference type="BioGRID-ORCS" id="54380">
    <property type="hits" value="3 hits in 80 CRISPR screens"/>
</dbReference>
<dbReference type="ChiTaRS" id="Smarcal1">
    <property type="organism name" value="mouse"/>
</dbReference>
<dbReference type="EvolutionaryTrace" id="Q8BJL0"/>
<dbReference type="PRO" id="PR:Q8BJL0"/>
<dbReference type="Proteomes" id="UP000000589">
    <property type="component" value="Chromosome 1"/>
</dbReference>
<dbReference type="RNAct" id="Q8BJL0">
    <property type="molecule type" value="protein"/>
</dbReference>
<dbReference type="Bgee" id="ENSMUSG00000039354">
    <property type="expression patterns" value="Expressed in primary oocyte and 256 other cell types or tissues"/>
</dbReference>
<dbReference type="ExpressionAtlas" id="Q8BJL0">
    <property type="expression patterns" value="baseline and differential"/>
</dbReference>
<dbReference type="GO" id="GO:0005662">
    <property type="term" value="C:DNA replication factor A complex"/>
    <property type="evidence" value="ECO:0007669"/>
    <property type="project" value="Ensembl"/>
</dbReference>
<dbReference type="GO" id="GO:0005654">
    <property type="term" value="C:nucleoplasm"/>
    <property type="evidence" value="ECO:0007669"/>
    <property type="project" value="Ensembl"/>
</dbReference>
<dbReference type="GO" id="GO:0005634">
    <property type="term" value="C:nucleus"/>
    <property type="evidence" value="ECO:0000250"/>
    <property type="project" value="UniProtKB"/>
</dbReference>
<dbReference type="GO" id="GO:0035861">
    <property type="term" value="C:site of double-strand break"/>
    <property type="evidence" value="ECO:0000250"/>
    <property type="project" value="UniProtKB"/>
</dbReference>
<dbReference type="GO" id="GO:0005524">
    <property type="term" value="F:ATP binding"/>
    <property type="evidence" value="ECO:0007669"/>
    <property type="project" value="UniProtKB-KW"/>
</dbReference>
<dbReference type="GO" id="GO:0008094">
    <property type="term" value="F:ATP-dependent activity, acting on DNA"/>
    <property type="evidence" value="ECO:0000314"/>
    <property type="project" value="MGI"/>
</dbReference>
<dbReference type="GO" id="GO:0036310">
    <property type="term" value="F:ATP-dependent DNA/DNA annealing activity"/>
    <property type="evidence" value="ECO:0000250"/>
    <property type="project" value="UniProtKB"/>
</dbReference>
<dbReference type="GO" id="GO:0004386">
    <property type="term" value="F:helicase activity"/>
    <property type="evidence" value="ECO:0007669"/>
    <property type="project" value="UniProtKB-KW"/>
</dbReference>
<dbReference type="GO" id="GO:0016787">
    <property type="term" value="F:hydrolase activity"/>
    <property type="evidence" value="ECO:0007669"/>
    <property type="project" value="UniProtKB-KW"/>
</dbReference>
<dbReference type="GO" id="GO:0006974">
    <property type="term" value="P:DNA damage response"/>
    <property type="evidence" value="ECO:0000250"/>
    <property type="project" value="UniProtKB"/>
</dbReference>
<dbReference type="GO" id="GO:0006303">
    <property type="term" value="P:double-strand break repair via nonhomologous end joining"/>
    <property type="evidence" value="ECO:0007669"/>
    <property type="project" value="Ensembl"/>
</dbReference>
<dbReference type="GO" id="GO:0006357">
    <property type="term" value="P:regulation of transcription by RNA polymerase II"/>
    <property type="evidence" value="ECO:0000250"/>
    <property type="project" value="UniProtKB"/>
</dbReference>
<dbReference type="GO" id="GO:0031297">
    <property type="term" value="P:replication fork processing"/>
    <property type="evidence" value="ECO:0000250"/>
    <property type="project" value="UniProtKB"/>
</dbReference>
<dbReference type="CDD" id="cd18010">
    <property type="entry name" value="DEXHc_HARP_SMARCAL1"/>
    <property type="match status" value="1"/>
</dbReference>
<dbReference type="CDD" id="cd18793">
    <property type="entry name" value="SF2_C_SNF"/>
    <property type="match status" value="1"/>
</dbReference>
<dbReference type="FunFam" id="3.40.50.300:FF:001036">
    <property type="entry name" value="SWI/SNF related, matrix associated, actin dependent regulator of chromatin, subfamily a like 1"/>
    <property type="match status" value="1"/>
</dbReference>
<dbReference type="FunFam" id="3.40.50.10810:FF:000026">
    <property type="entry name" value="SWI/SNF related, matrix associated, actin dependent regulator of chromatin, subfamily a-like 1"/>
    <property type="match status" value="1"/>
</dbReference>
<dbReference type="Gene3D" id="3.40.50.300">
    <property type="entry name" value="P-loop containing nucleotide triphosphate hydrolases"/>
    <property type="match status" value="1"/>
</dbReference>
<dbReference type="Gene3D" id="3.40.50.10810">
    <property type="entry name" value="Tandem AAA-ATPase domain"/>
    <property type="match status" value="1"/>
</dbReference>
<dbReference type="InterPro" id="IPR010003">
    <property type="entry name" value="HARP_dom"/>
</dbReference>
<dbReference type="InterPro" id="IPR014001">
    <property type="entry name" value="Helicase_ATP-bd"/>
</dbReference>
<dbReference type="InterPro" id="IPR001650">
    <property type="entry name" value="Helicase_C-like"/>
</dbReference>
<dbReference type="InterPro" id="IPR027417">
    <property type="entry name" value="P-loop_NTPase"/>
</dbReference>
<dbReference type="InterPro" id="IPR038718">
    <property type="entry name" value="SNF2-like_sf"/>
</dbReference>
<dbReference type="InterPro" id="IPR049730">
    <property type="entry name" value="SNF2/RAD54-like_C"/>
</dbReference>
<dbReference type="InterPro" id="IPR000330">
    <property type="entry name" value="SNF2_N"/>
</dbReference>
<dbReference type="PANTHER" id="PTHR45766">
    <property type="entry name" value="DNA ANNEALING HELICASE AND ENDONUCLEASE ZRANB3 FAMILY MEMBER"/>
    <property type="match status" value="1"/>
</dbReference>
<dbReference type="PANTHER" id="PTHR45766:SF6">
    <property type="entry name" value="SWI_SNF-RELATED MATRIX-ASSOCIATED ACTIN-DEPENDENT REGULATOR OF CHROMATIN SUBFAMILY A-LIKE PROTEIN 1"/>
    <property type="match status" value="1"/>
</dbReference>
<dbReference type="Pfam" id="PF07443">
    <property type="entry name" value="HARP"/>
    <property type="match status" value="2"/>
</dbReference>
<dbReference type="Pfam" id="PF00271">
    <property type="entry name" value="Helicase_C"/>
    <property type="match status" value="1"/>
</dbReference>
<dbReference type="Pfam" id="PF00176">
    <property type="entry name" value="SNF2-rel_dom"/>
    <property type="match status" value="1"/>
</dbReference>
<dbReference type="SMART" id="SM00487">
    <property type="entry name" value="DEXDc"/>
    <property type="match status" value="1"/>
</dbReference>
<dbReference type="SMART" id="SM00490">
    <property type="entry name" value="HELICc"/>
    <property type="match status" value="1"/>
</dbReference>
<dbReference type="SUPFAM" id="SSF52540">
    <property type="entry name" value="P-loop containing nucleoside triphosphate hydrolases"/>
    <property type="match status" value="2"/>
</dbReference>
<dbReference type="PROSITE" id="PS51467">
    <property type="entry name" value="HARP"/>
    <property type="match status" value="2"/>
</dbReference>
<dbReference type="PROSITE" id="PS51192">
    <property type="entry name" value="HELICASE_ATP_BIND_1"/>
    <property type="match status" value="1"/>
</dbReference>
<dbReference type="PROSITE" id="PS51194">
    <property type="entry name" value="HELICASE_CTER"/>
    <property type="match status" value="1"/>
</dbReference>
<name>SMAL1_MOUSE</name>
<sequence>MSLPLTEEQRKKIEENRQKALARRAEKLSEQPQSAASGSSAAGPSQSKQGSLLNLLAEPSKPVGHASIFKQQNLSNSFPTDQRPHSSRCSQPSPAEETTGLWKTQGEMSTACPKPNPSPPGASNQPLLGYKSSEGQPQATWDTGASSSGPFPRDPELEAKAARPSTSRQSISDSFYVLGGKTPRTEGRPPNILQTTPQNTGFLRGACIKTGDRFRVKIGYNQELIAVFKSLPSRHYDSFTKTWDFSMSDYRALMKAVERLSTVSLKPLDEAGGSVGGQTSLPSAPSLTFVTGKCMLISRVRFEVDIGYSEAVIGLFKQMESRSYDIKTRKWSFLLEEHNKLIARSRELKQVQLDPLPKTVTLAFASQLEKTSPKLKADVPEADLSGVDAKLVSSLMPFQREGVSFAISKRGRLLLADDMGLGKTVQAICIAAFYRKEWPLLVVVPSSVRFTWEQAFLRWLPSLSPENINVVVTGKGRLTAGLVNIVSFDLLCKLERQLKTPFKVVIIDESHFLKNIKTARCRAAVPILKVAKRVILLSGTPAMSRPAELYTQIIAVKPTFFPQFHAFGLRYCDAKRLPWGWDYSGSSNLGELKLLLEEAIMLRRLKSDVLSQLPAKQRKMVVVNPGRISSRAKAALDAAAKEMTKDKTKQQQKEALLVFFNRTAEAKIPCVVEYILDLLDSGREKFLVFAHHKVILDAVAKELERKNVQHIRIDGSTPSADREAQCQRFQLSKGHTVALLSITAANMGLTFSTADLVVFAELFWNPGVLIQAEDRVHRIGQTNSVSIHYLVAKGTADDYLWPLIQEKIKVLGEAGLSETNFSEMTEATDYVHKDPKQKTIYDLFQQSFEDDGNDMEFLEAAESFELGSTSGTSGNISQDLGDLLDEDEGSPPKKSRFEFFDNWDSFSSPF</sequence>